<keyword id="KW-0963">Cytoplasm</keyword>
<keyword id="KW-0444">Lipid biosynthesis</keyword>
<keyword id="KW-0443">Lipid metabolism</keyword>
<keyword id="KW-0594">Phospholipid biosynthesis</keyword>
<keyword id="KW-1208">Phospholipid metabolism</keyword>
<keyword id="KW-1185">Reference proteome</keyword>
<keyword id="KW-0808">Transferase</keyword>
<evidence type="ECO:0000255" key="1">
    <source>
        <dbReference type="HAMAP-Rule" id="MF_00019"/>
    </source>
</evidence>
<dbReference type="EC" id="2.3.1.274" evidence="1"/>
<dbReference type="EMBL" id="CP000449">
    <property type="protein sequence ID" value="ABI65816.1"/>
    <property type="molecule type" value="Genomic_DNA"/>
</dbReference>
<dbReference type="RefSeq" id="WP_011643463.1">
    <property type="nucleotide sequence ID" value="NC_008347.1"/>
</dbReference>
<dbReference type="SMR" id="Q0APH1"/>
<dbReference type="STRING" id="394221.Mmar10_1524"/>
<dbReference type="KEGG" id="mmr:Mmar10_1524"/>
<dbReference type="eggNOG" id="COG0416">
    <property type="taxonomic scope" value="Bacteria"/>
</dbReference>
<dbReference type="HOGENOM" id="CLU_039379_1_0_5"/>
<dbReference type="OrthoDB" id="9806408at2"/>
<dbReference type="UniPathway" id="UPA00085"/>
<dbReference type="Proteomes" id="UP000001964">
    <property type="component" value="Chromosome"/>
</dbReference>
<dbReference type="GO" id="GO:0005737">
    <property type="term" value="C:cytoplasm"/>
    <property type="evidence" value="ECO:0007669"/>
    <property type="project" value="UniProtKB-SubCell"/>
</dbReference>
<dbReference type="GO" id="GO:0043811">
    <property type="term" value="F:phosphate:acyl-[acyl carrier protein] acyltransferase activity"/>
    <property type="evidence" value="ECO:0007669"/>
    <property type="project" value="UniProtKB-UniRule"/>
</dbReference>
<dbReference type="GO" id="GO:0006633">
    <property type="term" value="P:fatty acid biosynthetic process"/>
    <property type="evidence" value="ECO:0007669"/>
    <property type="project" value="UniProtKB-UniRule"/>
</dbReference>
<dbReference type="GO" id="GO:0008654">
    <property type="term" value="P:phospholipid biosynthetic process"/>
    <property type="evidence" value="ECO:0007669"/>
    <property type="project" value="UniProtKB-KW"/>
</dbReference>
<dbReference type="Gene3D" id="3.40.718.10">
    <property type="entry name" value="Isopropylmalate Dehydrogenase"/>
    <property type="match status" value="1"/>
</dbReference>
<dbReference type="HAMAP" id="MF_00019">
    <property type="entry name" value="PlsX"/>
    <property type="match status" value="1"/>
</dbReference>
<dbReference type="InterPro" id="IPR003664">
    <property type="entry name" value="FA_synthesis"/>
</dbReference>
<dbReference type="InterPro" id="IPR012281">
    <property type="entry name" value="Phospholipid_synth_PlsX-like"/>
</dbReference>
<dbReference type="NCBIfam" id="TIGR00182">
    <property type="entry name" value="plsX"/>
    <property type="match status" value="1"/>
</dbReference>
<dbReference type="PANTHER" id="PTHR30100">
    <property type="entry name" value="FATTY ACID/PHOSPHOLIPID SYNTHESIS PROTEIN PLSX"/>
    <property type="match status" value="1"/>
</dbReference>
<dbReference type="PANTHER" id="PTHR30100:SF1">
    <property type="entry name" value="PHOSPHATE ACYLTRANSFERASE"/>
    <property type="match status" value="1"/>
</dbReference>
<dbReference type="Pfam" id="PF02504">
    <property type="entry name" value="FA_synthesis"/>
    <property type="match status" value="1"/>
</dbReference>
<dbReference type="PIRSF" id="PIRSF002465">
    <property type="entry name" value="Phsphlp_syn_PlsX"/>
    <property type="match status" value="1"/>
</dbReference>
<dbReference type="SUPFAM" id="SSF53659">
    <property type="entry name" value="Isocitrate/Isopropylmalate dehydrogenase-like"/>
    <property type="match status" value="1"/>
</dbReference>
<accession>Q0APH1</accession>
<organism>
    <name type="scientific">Maricaulis maris (strain MCS10)</name>
    <name type="common">Caulobacter maris</name>
    <dbReference type="NCBI Taxonomy" id="394221"/>
    <lineage>
        <taxon>Bacteria</taxon>
        <taxon>Pseudomonadati</taxon>
        <taxon>Pseudomonadota</taxon>
        <taxon>Alphaproteobacteria</taxon>
        <taxon>Maricaulales</taxon>
        <taxon>Maricaulaceae</taxon>
        <taxon>Maricaulis</taxon>
    </lineage>
</organism>
<name>PLSX_MARMM</name>
<protein>
    <recommendedName>
        <fullName evidence="1">Phosphate acyltransferase</fullName>
        <ecNumber evidence="1">2.3.1.274</ecNumber>
    </recommendedName>
    <alternativeName>
        <fullName evidence="1">Acyl-ACP phosphotransacylase</fullName>
    </alternativeName>
    <alternativeName>
        <fullName evidence="1">Acyl-[acyl-carrier-protein]--phosphate acyltransferase</fullName>
    </alternativeName>
    <alternativeName>
        <fullName evidence="1">Phosphate-acyl-ACP acyltransferase</fullName>
    </alternativeName>
</protein>
<sequence>MTAIPTISVDAMGGDLGPAAVVEGIGHALKRWPDRKATYLLHGDEALLAPLLARHPKVAAVCELRHTETLVQMTDKPSEAVRRARGSSMWNAIQSVKSGEAGAIVSSGNTGALMAIGKVILRMKKGVHRPAISANWPTPKGHTVVLDVGANVQCNATQLVEFAIMGEAYHRAVFGGEAPSVGLLNVGQEELKGNDTVREADQLIRKANLDIAYQGFIEGNDISAGGIDVVVTDGFTGNIALKTAEGTARLVAGWVRDALTSSLLAKLAAGLLSLGALERLRQRMDPRYINGGVLLGLKGIVVKSHGGADGEGFASALGLAYVMAQSDFMAQIRANLDKFASFEEQEVAAAS</sequence>
<feature type="chain" id="PRO_1000001785" description="Phosphate acyltransferase">
    <location>
        <begin position="1"/>
        <end position="351"/>
    </location>
</feature>
<comment type="function">
    <text evidence="1">Catalyzes the reversible formation of acyl-phosphate (acyl-PO(4)) from acyl-[acyl-carrier-protein] (acyl-ACP). This enzyme utilizes acyl-ACP as fatty acyl donor, but not acyl-CoA.</text>
</comment>
<comment type="catalytic activity">
    <reaction evidence="1">
        <text>a fatty acyl-[ACP] + phosphate = an acyl phosphate + holo-[ACP]</text>
        <dbReference type="Rhea" id="RHEA:42292"/>
        <dbReference type="Rhea" id="RHEA-COMP:9685"/>
        <dbReference type="Rhea" id="RHEA-COMP:14125"/>
        <dbReference type="ChEBI" id="CHEBI:43474"/>
        <dbReference type="ChEBI" id="CHEBI:59918"/>
        <dbReference type="ChEBI" id="CHEBI:64479"/>
        <dbReference type="ChEBI" id="CHEBI:138651"/>
        <dbReference type="EC" id="2.3.1.274"/>
    </reaction>
</comment>
<comment type="pathway">
    <text evidence="1">Lipid metabolism; phospholipid metabolism.</text>
</comment>
<comment type="subunit">
    <text evidence="1">Homodimer. Probably interacts with PlsY.</text>
</comment>
<comment type="subcellular location">
    <subcellularLocation>
        <location evidence="1">Cytoplasm</location>
    </subcellularLocation>
    <text evidence="1">Associated with the membrane possibly through PlsY.</text>
</comment>
<comment type="similarity">
    <text evidence="1">Belongs to the PlsX family.</text>
</comment>
<reference key="1">
    <citation type="submission" date="2006-08" db="EMBL/GenBank/DDBJ databases">
        <title>Complete sequence of Maricaulis maris MCS10.</title>
        <authorList>
            <consortium name="US DOE Joint Genome Institute"/>
            <person name="Copeland A."/>
            <person name="Lucas S."/>
            <person name="Lapidus A."/>
            <person name="Barry K."/>
            <person name="Detter J.C."/>
            <person name="Glavina del Rio T."/>
            <person name="Hammon N."/>
            <person name="Israni S."/>
            <person name="Dalin E."/>
            <person name="Tice H."/>
            <person name="Pitluck S."/>
            <person name="Saunders E."/>
            <person name="Brettin T."/>
            <person name="Bruce D."/>
            <person name="Han C."/>
            <person name="Tapia R."/>
            <person name="Gilna P."/>
            <person name="Schmutz J."/>
            <person name="Larimer F."/>
            <person name="Land M."/>
            <person name="Hauser L."/>
            <person name="Kyrpides N."/>
            <person name="Mikhailova N."/>
            <person name="Viollier P."/>
            <person name="Stephens C."/>
            <person name="Richardson P."/>
        </authorList>
    </citation>
    <scope>NUCLEOTIDE SEQUENCE [LARGE SCALE GENOMIC DNA]</scope>
    <source>
        <strain>MCS10</strain>
    </source>
</reference>
<proteinExistence type="inferred from homology"/>
<gene>
    <name evidence="1" type="primary">plsX</name>
    <name type="ordered locus">Mmar10_1524</name>
</gene>